<organism>
    <name type="scientific">Rubrobacter xylanophilus (strain DSM 9941 / JCM 11954 / NBRC 16129 / PRD-1)</name>
    <dbReference type="NCBI Taxonomy" id="266117"/>
    <lineage>
        <taxon>Bacteria</taxon>
        <taxon>Bacillati</taxon>
        <taxon>Actinomycetota</taxon>
        <taxon>Rubrobacteria</taxon>
        <taxon>Rubrobacterales</taxon>
        <taxon>Rubrobacteraceae</taxon>
        <taxon>Rubrobacter</taxon>
    </lineage>
</organism>
<proteinExistence type="inferred from homology"/>
<name>SYT_RUBXD</name>
<feature type="chain" id="PRO_1000098604" description="Threonine--tRNA ligase">
    <location>
        <begin position="1"/>
        <end position="639"/>
    </location>
</feature>
<feature type="domain" description="TGS" evidence="2">
    <location>
        <begin position="1"/>
        <end position="61"/>
    </location>
</feature>
<feature type="region of interest" description="Catalytic" evidence="1">
    <location>
        <begin position="239"/>
        <end position="536"/>
    </location>
</feature>
<feature type="binding site" evidence="1">
    <location>
        <position position="333"/>
    </location>
    <ligand>
        <name>Zn(2+)</name>
        <dbReference type="ChEBI" id="CHEBI:29105"/>
    </ligand>
</feature>
<feature type="binding site" evidence="1">
    <location>
        <position position="384"/>
    </location>
    <ligand>
        <name>Zn(2+)</name>
        <dbReference type="ChEBI" id="CHEBI:29105"/>
    </ligand>
</feature>
<feature type="binding site" evidence="1">
    <location>
        <position position="513"/>
    </location>
    <ligand>
        <name>Zn(2+)</name>
        <dbReference type="ChEBI" id="CHEBI:29105"/>
    </ligand>
</feature>
<accession>Q1AWG4</accession>
<dbReference type="EC" id="6.1.1.3" evidence="1"/>
<dbReference type="EMBL" id="CP000386">
    <property type="protein sequence ID" value="ABG04264.1"/>
    <property type="molecule type" value="Genomic_DNA"/>
</dbReference>
<dbReference type="RefSeq" id="WP_011564281.1">
    <property type="nucleotide sequence ID" value="NC_008148.1"/>
</dbReference>
<dbReference type="SMR" id="Q1AWG4"/>
<dbReference type="STRING" id="266117.Rxyl_1300"/>
<dbReference type="KEGG" id="rxy:Rxyl_1300"/>
<dbReference type="eggNOG" id="COG0441">
    <property type="taxonomic scope" value="Bacteria"/>
</dbReference>
<dbReference type="HOGENOM" id="CLU_008554_0_1_11"/>
<dbReference type="OrthoDB" id="9802304at2"/>
<dbReference type="PhylomeDB" id="Q1AWG4"/>
<dbReference type="Proteomes" id="UP000006637">
    <property type="component" value="Chromosome"/>
</dbReference>
<dbReference type="GO" id="GO:0005737">
    <property type="term" value="C:cytoplasm"/>
    <property type="evidence" value="ECO:0007669"/>
    <property type="project" value="UniProtKB-SubCell"/>
</dbReference>
<dbReference type="GO" id="GO:0005524">
    <property type="term" value="F:ATP binding"/>
    <property type="evidence" value="ECO:0007669"/>
    <property type="project" value="UniProtKB-UniRule"/>
</dbReference>
<dbReference type="GO" id="GO:0046872">
    <property type="term" value="F:metal ion binding"/>
    <property type="evidence" value="ECO:0007669"/>
    <property type="project" value="UniProtKB-KW"/>
</dbReference>
<dbReference type="GO" id="GO:0004829">
    <property type="term" value="F:threonine-tRNA ligase activity"/>
    <property type="evidence" value="ECO:0007669"/>
    <property type="project" value="UniProtKB-UniRule"/>
</dbReference>
<dbReference type="GO" id="GO:0000049">
    <property type="term" value="F:tRNA binding"/>
    <property type="evidence" value="ECO:0007669"/>
    <property type="project" value="UniProtKB-KW"/>
</dbReference>
<dbReference type="GO" id="GO:0006435">
    <property type="term" value="P:threonyl-tRNA aminoacylation"/>
    <property type="evidence" value="ECO:0007669"/>
    <property type="project" value="UniProtKB-UniRule"/>
</dbReference>
<dbReference type="CDD" id="cd01667">
    <property type="entry name" value="TGS_ThrRS"/>
    <property type="match status" value="1"/>
</dbReference>
<dbReference type="CDD" id="cd00860">
    <property type="entry name" value="ThrRS_anticodon"/>
    <property type="match status" value="1"/>
</dbReference>
<dbReference type="CDD" id="cd00771">
    <property type="entry name" value="ThrRS_core"/>
    <property type="match status" value="1"/>
</dbReference>
<dbReference type="FunFam" id="3.30.54.20:FF:000002">
    <property type="entry name" value="Threonine--tRNA ligase"/>
    <property type="match status" value="1"/>
</dbReference>
<dbReference type="FunFam" id="3.30.930.10:FF:000002">
    <property type="entry name" value="Threonine--tRNA ligase"/>
    <property type="match status" value="1"/>
</dbReference>
<dbReference type="FunFam" id="3.40.50.800:FF:000001">
    <property type="entry name" value="Threonine--tRNA ligase"/>
    <property type="match status" value="1"/>
</dbReference>
<dbReference type="FunFam" id="3.30.980.10:FF:000005">
    <property type="entry name" value="Threonyl-tRNA synthetase, mitochondrial"/>
    <property type="match status" value="1"/>
</dbReference>
<dbReference type="Gene3D" id="3.10.20.30">
    <property type="match status" value="1"/>
</dbReference>
<dbReference type="Gene3D" id="3.30.54.20">
    <property type="match status" value="1"/>
</dbReference>
<dbReference type="Gene3D" id="3.40.50.800">
    <property type="entry name" value="Anticodon-binding domain"/>
    <property type="match status" value="1"/>
</dbReference>
<dbReference type="Gene3D" id="3.30.930.10">
    <property type="entry name" value="Bira Bifunctional Protein, Domain 2"/>
    <property type="match status" value="1"/>
</dbReference>
<dbReference type="Gene3D" id="3.30.980.10">
    <property type="entry name" value="Threonyl-trna Synthetase, Chain A, domain 2"/>
    <property type="match status" value="1"/>
</dbReference>
<dbReference type="HAMAP" id="MF_00184">
    <property type="entry name" value="Thr_tRNA_synth"/>
    <property type="match status" value="1"/>
</dbReference>
<dbReference type="InterPro" id="IPR002314">
    <property type="entry name" value="aa-tRNA-synt_IIb"/>
</dbReference>
<dbReference type="InterPro" id="IPR006195">
    <property type="entry name" value="aa-tRNA-synth_II"/>
</dbReference>
<dbReference type="InterPro" id="IPR045864">
    <property type="entry name" value="aa-tRNA-synth_II/BPL/LPL"/>
</dbReference>
<dbReference type="InterPro" id="IPR004154">
    <property type="entry name" value="Anticodon-bd"/>
</dbReference>
<dbReference type="InterPro" id="IPR036621">
    <property type="entry name" value="Anticodon-bd_dom_sf"/>
</dbReference>
<dbReference type="InterPro" id="IPR012675">
    <property type="entry name" value="Beta-grasp_dom_sf"/>
</dbReference>
<dbReference type="InterPro" id="IPR004095">
    <property type="entry name" value="TGS"/>
</dbReference>
<dbReference type="InterPro" id="IPR012676">
    <property type="entry name" value="TGS-like"/>
</dbReference>
<dbReference type="InterPro" id="IPR002320">
    <property type="entry name" value="Thr-tRNA-ligase_IIa"/>
</dbReference>
<dbReference type="InterPro" id="IPR018163">
    <property type="entry name" value="Thr/Ala-tRNA-synth_IIc_edit"/>
</dbReference>
<dbReference type="InterPro" id="IPR047246">
    <property type="entry name" value="ThrRS_anticodon"/>
</dbReference>
<dbReference type="InterPro" id="IPR033728">
    <property type="entry name" value="ThrRS_core"/>
</dbReference>
<dbReference type="InterPro" id="IPR012947">
    <property type="entry name" value="tRNA_SAD"/>
</dbReference>
<dbReference type="NCBIfam" id="TIGR00418">
    <property type="entry name" value="thrS"/>
    <property type="match status" value="1"/>
</dbReference>
<dbReference type="PANTHER" id="PTHR11451:SF44">
    <property type="entry name" value="THREONINE--TRNA LIGASE, CHLOROPLASTIC_MITOCHONDRIAL 2"/>
    <property type="match status" value="1"/>
</dbReference>
<dbReference type="PANTHER" id="PTHR11451">
    <property type="entry name" value="THREONINE-TRNA LIGASE"/>
    <property type="match status" value="1"/>
</dbReference>
<dbReference type="Pfam" id="PF03129">
    <property type="entry name" value="HGTP_anticodon"/>
    <property type="match status" value="1"/>
</dbReference>
<dbReference type="Pfam" id="PF02824">
    <property type="entry name" value="TGS"/>
    <property type="match status" value="1"/>
</dbReference>
<dbReference type="Pfam" id="PF00587">
    <property type="entry name" value="tRNA-synt_2b"/>
    <property type="match status" value="1"/>
</dbReference>
<dbReference type="Pfam" id="PF07973">
    <property type="entry name" value="tRNA_SAD"/>
    <property type="match status" value="1"/>
</dbReference>
<dbReference type="PRINTS" id="PR01047">
    <property type="entry name" value="TRNASYNTHTHR"/>
</dbReference>
<dbReference type="SMART" id="SM00863">
    <property type="entry name" value="tRNA_SAD"/>
    <property type="match status" value="1"/>
</dbReference>
<dbReference type="SUPFAM" id="SSF52954">
    <property type="entry name" value="Class II aaRS ABD-related"/>
    <property type="match status" value="1"/>
</dbReference>
<dbReference type="SUPFAM" id="SSF55681">
    <property type="entry name" value="Class II aaRS and biotin synthetases"/>
    <property type="match status" value="1"/>
</dbReference>
<dbReference type="SUPFAM" id="SSF81271">
    <property type="entry name" value="TGS-like"/>
    <property type="match status" value="1"/>
</dbReference>
<dbReference type="SUPFAM" id="SSF55186">
    <property type="entry name" value="ThrRS/AlaRS common domain"/>
    <property type="match status" value="1"/>
</dbReference>
<dbReference type="PROSITE" id="PS50862">
    <property type="entry name" value="AA_TRNA_LIGASE_II"/>
    <property type="match status" value="1"/>
</dbReference>
<dbReference type="PROSITE" id="PS51880">
    <property type="entry name" value="TGS"/>
    <property type="match status" value="1"/>
</dbReference>
<protein>
    <recommendedName>
        <fullName evidence="1">Threonine--tRNA ligase</fullName>
        <ecNumber evidence="1">6.1.1.3</ecNumber>
    </recommendedName>
    <alternativeName>
        <fullName evidence="1">Threonyl-tRNA synthetase</fullName>
        <shortName evidence="1">ThrRS</shortName>
    </alternativeName>
</protein>
<comment type="function">
    <text evidence="1">Catalyzes the attachment of threonine to tRNA(Thr) in a two-step reaction: L-threonine is first activated by ATP to form Thr-AMP and then transferred to the acceptor end of tRNA(Thr). Also edits incorrectly charged L-seryl-tRNA(Thr).</text>
</comment>
<comment type="catalytic activity">
    <reaction evidence="1">
        <text>tRNA(Thr) + L-threonine + ATP = L-threonyl-tRNA(Thr) + AMP + diphosphate + H(+)</text>
        <dbReference type="Rhea" id="RHEA:24624"/>
        <dbReference type="Rhea" id="RHEA-COMP:9670"/>
        <dbReference type="Rhea" id="RHEA-COMP:9704"/>
        <dbReference type="ChEBI" id="CHEBI:15378"/>
        <dbReference type="ChEBI" id="CHEBI:30616"/>
        <dbReference type="ChEBI" id="CHEBI:33019"/>
        <dbReference type="ChEBI" id="CHEBI:57926"/>
        <dbReference type="ChEBI" id="CHEBI:78442"/>
        <dbReference type="ChEBI" id="CHEBI:78534"/>
        <dbReference type="ChEBI" id="CHEBI:456215"/>
        <dbReference type="EC" id="6.1.1.3"/>
    </reaction>
</comment>
<comment type="cofactor">
    <cofactor evidence="1">
        <name>Zn(2+)</name>
        <dbReference type="ChEBI" id="CHEBI:29105"/>
    </cofactor>
    <text evidence="1">Binds 1 zinc ion per subunit.</text>
</comment>
<comment type="subunit">
    <text evidence="1">Homodimer.</text>
</comment>
<comment type="subcellular location">
    <subcellularLocation>
        <location evidence="1">Cytoplasm</location>
    </subcellularLocation>
</comment>
<comment type="similarity">
    <text evidence="1">Belongs to the class-II aminoacyl-tRNA synthetase family.</text>
</comment>
<evidence type="ECO:0000255" key="1">
    <source>
        <dbReference type="HAMAP-Rule" id="MF_00184"/>
    </source>
</evidence>
<evidence type="ECO:0000255" key="2">
    <source>
        <dbReference type="PROSITE-ProRule" id="PRU01228"/>
    </source>
</evidence>
<keyword id="KW-0030">Aminoacyl-tRNA synthetase</keyword>
<keyword id="KW-0067">ATP-binding</keyword>
<keyword id="KW-0963">Cytoplasm</keyword>
<keyword id="KW-0436">Ligase</keyword>
<keyword id="KW-0479">Metal-binding</keyword>
<keyword id="KW-0547">Nucleotide-binding</keyword>
<keyword id="KW-0648">Protein biosynthesis</keyword>
<keyword id="KW-1185">Reference proteome</keyword>
<keyword id="KW-0694">RNA-binding</keyword>
<keyword id="KW-0820">tRNA-binding</keyword>
<keyword id="KW-0862">Zinc</keyword>
<sequence>MATVRLPDGKELEVGSGERLEDVARRIGPRLARDAVVARLNGRLVDLDLPVDGGGELEFVTADSPEGLYVLRHSTAHAMAQAILELYPGSKLTIGPPVDDGFYYDIEVNGRISEEDLPRIEEKMREIARRDLPVRREEVSKEEARRLYRDNPYKLELIDEIPDERVSIYRQGDFFDLCRGPHVPSTGRLGAFKLQSVAGAYWRGDENNPMLTRIYGTAWPTEKQLRAYLKRLEEARARDHRRLGRELGLFTFAPEDVGPGIPLFLPKGETLRHLMEGFVREVQTRHGYQHVWTGHLVNERLYARSGHLEHYRDAMFPPMRDGEVSYRLKPMNCPSHMTLFNSRPRSYRELPVRYAEFATLYRYEKSGELSGLTRVRSLTQDDAHVFCTEEQVQEEFARALAIIREVLDAYGFTDYRVRLSLRDPEGGKYIADEEKWGRAEGALRAALDAAGIDYEPAPGEAAFYGPKADFMARDVLGREWQLSTIQVDFIQPGRLGCEYVGEDGERHTPVLLHRAVTGTTERFMAVLIEHYAGAFPVWLSPVQAVVIPVADRHLEYARRVREELSEGGLRVEVDDSPNSMQKKIRENARQKTPYLLIVGDREEEAGTVNVRRRGEGKRQTEMGLRGFLERVRGEVAARR</sequence>
<reference key="1">
    <citation type="submission" date="2006-06" db="EMBL/GenBank/DDBJ databases">
        <title>Complete sequence of Rubrobacter xylanophilus DSM 9941.</title>
        <authorList>
            <consortium name="US DOE Joint Genome Institute"/>
            <person name="Copeland A."/>
            <person name="Lucas S."/>
            <person name="Lapidus A."/>
            <person name="Barry K."/>
            <person name="Detter J.C."/>
            <person name="Glavina del Rio T."/>
            <person name="Hammon N."/>
            <person name="Israni S."/>
            <person name="Dalin E."/>
            <person name="Tice H."/>
            <person name="Pitluck S."/>
            <person name="Munk A.C."/>
            <person name="Brettin T."/>
            <person name="Bruce D."/>
            <person name="Han C."/>
            <person name="Tapia R."/>
            <person name="Gilna P."/>
            <person name="Schmutz J."/>
            <person name="Larimer F."/>
            <person name="Land M."/>
            <person name="Hauser L."/>
            <person name="Kyrpides N."/>
            <person name="Lykidis A."/>
            <person name="da Costa M.S."/>
            <person name="Rainey F.A."/>
            <person name="Empadinhas N."/>
            <person name="Jolivet E."/>
            <person name="Battista J.R."/>
            <person name="Richardson P."/>
        </authorList>
    </citation>
    <scope>NUCLEOTIDE SEQUENCE [LARGE SCALE GENOMIC DNA]</scope>
    <source>
        <strain>DSM 9941 / JCM 11954 / NBRC 16129 / PRD-1</strain>
    </source>
</reference>
<gene>
    <name evidence="1" type="primary">thrS</name>
    <name type="ordered locus">Rxyl_1300</name>
</gene>